<organism>
    <name type="scientific">Rattus norvegicus</name>
    <name type="common">Rat</name>
    <dbReference type="NCBI Taxonomy" id="10116"/>
    <lineage>
        <taxon>Eukaryota</taxon>
        <taxon>Metazoa</taxon>
        <taxon>Chordata</taxon>
        <taxon>Craniata</taxon>
        <taxon>Vertebrata</taxon>
        <taxon>Euteleostomi</taxon>
        <taxon>Mammalia</taxon>
        <taxon>Eutheria</taxon>
        <taxon>Euarchontoglires</taxon>
        <taxon>Glires</taxon>
        <taxon>Rodentia</taxon>
        <taxon>Myomorpha</taxon>
        <taxon>Muroidea</taxon>
        <taxon>Muridae</taxon>
        <taxon>Murinae</taxon>
        <taxon>Rattus</taxon>
    </lineage>
</organism>
<dbReference type="EMBL" id="BC061747">
    <property type="protein sequence ID" value="AAH61747.1"/>
    <property type="molecule type" value="mRNA"/>
</dbReference>
<dbReference type="RefSeq" id="NP_954536.1">
    <property type="nucleotide sequence ID" value="NM_199105.2"/>
</dbReference>
<dbReference type="RefSeq" id="XP_006232576.1">
    <property type="nucleotide sequence ID" value="XM_006232514.5"/>
</dbReference>
<dbReference type="FunCoup" id="Q6P7B4">
    <property type="interactions" value="262"/>
</dbReference>
<dbReference type="STRING" id="10116.ENSRNOP00000073355"/>
<dbReference type="GlyCosmos" id="Q6P7B4">
    <property type="glycosylation" value="1 site, No reported glycans"/>
</dbReference>
<dbReference type="GlyGen" id="Q6P7B4">
    <property type="glycosylation" value="1 site"/>
</dbReference>
<dbReference type="PhosphoSitePlus" id="Q6P7B4"/>
<dbReference type="PaxDb" id="10116-ENSRNOP00000013525"/>
<dbReference type="Ensembl" id="ENSRNOT00000013524.6">
    <property type="protein sequence ID" value="ENSRNOP00000013525.3"/>
    <property type="gene ID" value="ENSRNOG00000010183.6"/>
</dbReference>
<dbReference type="GeneID" id="310540"/>
<dbReference type="KEGG" id="rno:310540"/>
<dbReference type="UCSC" id="RGD:735075">
    <property type="organism name" value="rat"/>
</dbReference>
<dbReference type="AGR" id="RGD:735075"/>
<dbReference type="CTD" id="51313"/>
<dbReference type="RGD" id="735075">
    <property type="gene designation" value="Gask1b"/>
</dbReference>
<dbReference type="eggNOG" id="ENOG502QU38">
    <property type="taxonomic scope" value="Eukaryota"/>
</dbReference>
<dbReference type="GeneTree" id="ENSGT00420000029769"/>
<dbReference type="HOGENOM" id="CLU_033542_2_0_1"/>
<dbReference type="InParanoid" id="Q6P7B4"/>
<dbReference type="OMA" id="PPWFSAQ"/>
<dbReference type="OrthoDB" id="10011371at2759"/>
<dbReference type="PhylomeDB" id="Q6P7B4"/>
<dbReference type="TreeFam" id="TF330994"/>
<dbReference type="PRO" id="PR:Q6P7B4"/>
<dbReference type="Proteomes" id="UP000002494">
    <property type="component" value="Chromosome 2"/>
</dbReference>
<dbReference type="Bgee" id="ENSRNOG00000010183">
    <property type="expression patterns" value="Expressed in lung and 19 other cell types or tissues"/>
</dbReference>
<dbReference type="GO" id="GO:0005794">
    <property type="term" value="C:Golgi apparatus"/>
    <property type="evidence" value="ECO:0000318"/>
    <property type="project" value="GO_Central"/>
</dbReference>
<dbReference type="GO" id="GO:0000139">
    <property type="term" value="C:Golgi membrane"/>
    <property type="evidence" value="ECO:0007669"/>
    <property type="project" value="UniProtKB-SubCell"/>
</dbReference>
<dbReference type="InterPro" id="IPR029207">
    <property type="entry name" value="FAM198"/>
</dbReference>
<dbReference type="PANTHER" id="PTHR15905:SF1">
    <property type="entry name" value="GOLGI-ASSOCIATED KINASE 1B"/>
    <property type="match status" value="1"/>
</dbReference>
<dbReference type="PANTHER" id="PTHR15905">
    <property type="entry name" value="GOLGI-ASSOCIATED KINASE 1B-RELATED"/>
    <property type="match status" value="1"/>
</dbReference>
<dbReference type="Pfam" id="PF15051">
    <property type="entry name" value="FAM198"/>
    <property type="match status" value="1"/>
</dbReference>
<name>GAK1B_RAT</name>
<keyword id="KW-0325">Glycoprotein</keyword>
<keyword id="KW-0333">Golgi apparatus</keyword>
<keyword id="KW-0472">Membrane</keyword>
<keyword id="KW-1185">Reference proteome</keyword>
<keyword id="KW-0735">Signal-anchor</keyword>
<keyword id="KW-0812">Transmembrane</keyword>
<keyword id="KW-1133">Transmembrane helix</keyword>
<proteinExistence type="evidence at transcript level"/>
<accession>Q6P7B4</accession>
<gene>
    <name evidence="5" type="primary">Gask1b</name>
    <name evidence="1" type="synonym">Ened</name>
    <name evidence="5" type="synonym">Fam198b</name>
</gene>
<reference key="1">
    <citation type="journal article" date="2004" name="Genome Res.">
        <title>The status, quality, and expansion of the NIH full-length cDNA project: the Mammalian Gene Collection (MGC).</title>
        <authorList>
            <consortium name="The MGC Project Team"/>
        </authorList>
    </citation>
    <scope>NUCLEOTIDE SEQUENCE [LARGE SCALE MRNA]</scope>
    <source>
        <tissue>Prostate</tissue>
    </source>
</reference>
<feature type="chain" id="PRO_0000288904" description="Golgi-associated kinase 1B">
    <location>
        <begin position="1"/>
        <end position="516"/>
    </location>
</feature>
<feature type="topological domain" description="Cytoplasmic" evidence="3">
    <location>
        <begin position="1"/>
        <end position="37"/>
    </location>
</feature>
<feature type="transmembrane region" description="Helical; Signal-anchor for type II membrane protein" evidence="3">
    <location>
        <begin position="38"/>
        <end position="55"/>
    </location>
</feature>
<feature type="topological domain" description="Extracellular" evidence="3">
    <location>
        <begin position="56"/>
        <end position="516"/>
    </location>
</feature>
<feature type="glycosylation site" description="N-linked (GlcNAc...) asparagine" evidence="3">
    <location>
        <position position="286"/>
    </location>
</feature>
<sequence length="516" mass="58206">MTCPDKLGQLINWFVCSLCAPRVCKLWSSRRPRTRRNLLLGTACAIYLGFLVSQVGKGSFQHGQATNRGPPNNQDIFKVPFPEIPLDGTLAPPESQGNGSTLQPNVVYITLRSKRSKPANIRGTVKPKRRKKYAVASVAPDQEVLVRPSLIQPEVARAADAEVPGYVQGYLTKVGERPWRMLHGPRVRGSNLQQPRAPESNIRIYSESAPSWLSKEDIRRMRLLADGEVASILPTIFEGGTRLLMLEGSTSGSVPGCGPSPCGLLKQPLDMSEVFAFHLDRILGLNRTLPSVSRKLEFIQDGRPRPIILWDSSLVPSSNVSHSSVKITWGTYQQLLKQKCWLNGRVPRPEWGCTEVHHHEWSKMALFDFLLQIYNRLDTNCCGFRPRKEDACVQNGLRPNCEDQSSVTLAHIIQRKNDPRHLVFINNKGFFDRSEDNLNFKLLEGIREFPESAVSVLKSQHLRQKLLQSLFLDQVYWESQGGRQGIEKLIDVIERRARILITYINAHGARVLPMNE</sequence>
<protein>
    <recommendedName>
        <fullName evidence="5">Golgi-associated kinase 1B</fullName>
    </recommendedName>
    <alternativeName>
        <fullName evidence="1">Expressed in nerve and epithelium during development</fullName>
    </alternativeName>
    <alternativeName>
        <fullName evidence="5">Protein Fam198b</fullName>
    </alternativeName>
</protein>
<comment type="subcellular location">
    <subcellularLocation>
        <location evidence="2">Golgi apparatus membrane</location>
        <topology evidence="2">Single-pass type II membrane protein</topology>
    </subcellularLocation>
</comment>
<comment type="similarity">
    <text evidence="4">Belongs to the GASK family.</text>
</comment>
<evidence type="ECO:0000250" key="1">
    <source>
        <dbReference type="UniProtKB" id="Q3UPI1"/>
    </source>
</evidence>
<evidence type="ECO:0000250" key="2">
    <source>
        <dbReference type="UniProtKB" id="Q6UWH4"/>
    </source>
</evidence>
<evidence type="ECO:0000255" key="3"/>
<evidence type="ECO:0000305" key="4"/>
<evidence type="ECO:0000312" key="5">
    <source>
        <dbReference type="RGD" id="735075"/>
    </source>
</evidence>